<proteinExistence type="inferred from homology"/>
<gene>
    <name evidence="1" type="primary">thrB</name>
    <name type="ordered locus">Ava_2794</name>
</gene>
<sequence>MSVVSSVTVKVPGTTANLGPGFDCIGAALTIYNQFQFTRLETSELIIQATGAEAERVPTDESNLLYQAFVKLYQYIDQTPPGVKVEIELGVPLARGLGSSATAIVGGLVAANRLAGEPLSQAQVMELAIAIEGHPDNVVPALVGGCRLAATGAMGWEICDVPWHGDIVPVLAIPDFELSTSEARRVLPTEYSRADAIFNTAHLGLLLRGLQTGKGEWLRAALQDKLHQPYRQALIPGYDAVNTAAVAAGAYGMVISGAGPTLLALADVSHAAAVAAAMSTAWREAGIKAVVRSLALDTHGAT</sequence>
<comment type="function">
    <text evidence="1">Catalyzes the ATP-dependent phosphorylation of L-homoserine to L-homoserine phosphate.</text>
</comment>
<comment type="catalytic activity">
    <reaction evidence="1">
        <text>L-homoserine + ATP = O-phospho-L-homoserine + ADP + H(+)</text>
        <dbReference type="Rhea" id="RHEA:13985"/>
        <dbReference type="ChEBI" id="CHEBI:15378"/>
        <dbReference type="ChEBI" id="CHEBI:30616"/>
        <dbReference type="ChEBI" id="CHEBI:57476"/>
        <dbReference type="ChEBI" id="CHEBI:57590"/>
        <dbReference type="ChEBI" id="CHEBI:456216"/>
        <dbReference type="EC" id="2.7.1.39"/>
    </reaction>
</comment>
<comment type="pathway">
    <text evidence="1">Amino-acid biosynthesis; L-threonine biosynthesis; L-threonine from L-aspartate: step 4/5.</text>
</comment>
<comment type="subcellular location">
    <subcellularLocation>
        <location evidence="1">Cytoplasm</location>
    </subcellularLocation>
</comment>
<comment type="similarity">
    <text evidence="1">Belongs to the GHMP kinase family. Homoserine kinase subfamily.</text>
</comment>
<keyword id="KW-0028">Amino-acid biosynthesis</keyword>
<keyword id="KW-0067">ATP-binding</keyword>
<keyword id="KW-0963">Cytoplasm</keyword>
<keyword id="KW-0418">Kinase</keyword>
<keyword id="KW-0547">Nucleotide-binding</keyword>
<keyword id="KW-0791">Threonine biosynthesis</keyword>
<keyword id="KW-0808">Transferase</keyword>
<reference key="1">
    <citation type="journal article" date="2014" name="Stand. Genomic Sci.">
        <title>Complete genome sequence of Anabaena variabilis ATCC 29413.</title>
        <authorList>
            <person name="Thiel T."/>
            <person name="Pratte B.S."/>
            <person name="Zhong J."/>
            <person name="Goodwin L."/>
            <person name="Copeland A."/>
            <person name="Lucas S."/>
            <person name="Han C."/>
            <person name="Pitluck S."/>
            <person name="Land M.L."/>
            <person name="Kyrpides N.C."/>
            <person name="Woyke T."/>
        </authorList>
    </citation>
    <scope>NUCLEOTIDE SEQUENCE [LARGE SCALE GENOMIC DNA]</scope>
    <source>
        <strain>ATCC 29413 / PCC 7937</strain>
    </source>
</reference>
<dbReference type="EC" id="2.7.1.39" evidence="1"/>
<dbReference type="EMBL" id="CP000117">
    <property type="protein sequence ID" value="ABA22407.1"/>
    <property type="molecule type" value="Genomic_DNA"/>
</dbReference>
<dbReference type="SMR" id="Q3M9C9"/>
<dbReference type="STRING" id="240292.Ava_2794"/>
<dbReference type="KEGG" id="ava:Ava_2794"/>
<dbReference type="eggNOG" id="COG0083">
    <property type="taxonomic scope" value="Bacteria"/>
</dbReference>
<dbReference type="HOGENOM" id="CLU_041243_0_2_3"/>
<dbReference type="UniPathway" id="UPA00050">
    <property type="reaction ID" value="UER00064"/>
</dbReference>
<dbReference type="Proteomes" id="UP000002533">
    <property type="component" value="Chromosome"/>
</dbReference>
<dbReference type="GO" id="GO:0005737">
    <property type="term" value="C:cytoplasm"/>
    <property type="evidence" value="ECO:0007669"/>
    <property type="project" value="UniProtKB-SubCell"/>
</dbReference>
<dbReference type="GO" id="GO:0005524">
    <property type="term" value="F:ATP binding"/>
    <property type="evidence" value="ECO:0007669"/>
    <property type="project" value="UniProtKB-UniRule"/>
</dbReference>
<dbReference type="GO" id="GO:0004413">
    <property type="term" value="F:homoserine kinase activity"/>
    <property type="evidence" value="ECO:0007669"/>
    <property type="project" value="UniProtKB-UniRule"/>
</dbReference>
<dbReference type="GO" id="GO:0009088">
    <property type="term" value="P:threonine biosynthetic process"/>
    <property type="evidence" value="ECO:0007669"/>
    <property type="project" value="UniProtKB-UniRule"/>
</dbReference>
<dbReference type="Gene3D" id="3.30.230.10">
    <property type="match status" value="1"/>
</dbReference>
<dbReference type="Gene3D" id="3.30.70.890">
    <property type="entry name" value="GHMP kinase, C-terminal domain"/>
    <property type="match status" value="1"/>
</dbReference>
<dbReference type="HAMAP" id="MF_00384">
    <property type="entry name" value="Homoser_kinase"/>
    <property type="match status" value="1"/>
</dbReference>
<dbReference type="InterPro" id="IPR013750">
    <property type="entry name" value="GHMP_kinase_C_dom"/>
</dbReference>
<dbReference type="InterPro" id="IPR036554">
    <property type="entry name" value="GHMP_kinase_C_sf"/>
</dbReference>
<dbReference type="InterPro" id="IPR006204">
    <property type="entry name" value="GHMP_kinase_N_dom"/>
</dbReference>
<dbReference type="InterPro" id="IPR006203">
    <property type="entry name" value="GHMP_knse_ATP-bd_CS"/>
</dbReference>
<dbReference type="InterPro" id="IPR000870">
    <property type="entry name" value="Homoserine_kinase"/>
</dbReference>
<dbReference type="InterPro" id="IPR020568">
    <property type="entry name" value="Ribosomal_Su5_D2-typ_SF"/>
</dbReference>
<dbReference type="InterPro" id="IPR014721">
    <property type="entry name" value="Ribsml_uS5_D2-typ_fold_subgr"/>
</dbReference>
<dbReference type="NCBIfam" id="NF002288">
    <property type="entry name" value="PRK01212.1-4"/>
    <property type="match status" value="1"/>
</dbReference>
<dbReference type="NCBIfam" id="TIGR00191">
    <property type="entry name" value="thrB"/>
    <property type="match status" value="1"/>
</dbReference>
<dbReference type="PANTHER" id="PTHR20861:SF1">
    <property type="entry name" value="HOMOSERINE KINASE"/>
    <property type="match status" value="1"/>
</dbReference>
<dbReference type="PANTHER" id="PTHR20861">
    <property type="entry name" value="HOMOSERINE/4-DIPHOSPHOCYTIDYL-2-C-METHYL-D-ERYTHRITOL KINASE"/>
    <property type="match status" value="1"/>
</dbReference>
<dbReference type="Pfam" id="PF08544">
    <property type="entry name" value="GHMP_kinases_C"/>
    <property type="match status" value="1"/>
</dbReference>
<dbReference type="Pfam" id="PF00288">
    <property type="entry name" value="GHMP_kinases_N"/>
    <property type="match status" value="1"/>
</dbReference>
<dbReference type="PIRSF" id="PIRSF000676">
    <property type="entry name" value="Homoser_kin"/>
    <property type="match status" value="1"/>
</dbReference>
<dbReference type="PRINTS" id="PR00958">
    <property type="entry name" value="HOMSERKINASE"/>
</dbReference>
<dbReference type="SUPFAM" id="SSF55060">
    <property type="entry name" value="GHMP Kinase, C-terminal domain"/>
    <property type="match status" value="1"/>
</dbReference>
<dbReference type="SUPFAM" id="SSF54211">
    <property type="entry name" value="Ribosomal protein S5 domain 2-like"/>
    <property type="match status" value="1"/>
</dbReference>
<dbReference type="PROSITE" id="PS00627">
    <property type="entry name" value="GHMP_KINASES_ATP"/>
    <property type="match status" value="1"/>
</dbReference>
<feature type="chain" id="PRO_1000049106" description="Homoserine kinase">
    <location>
        <begin position="1"/>
        <end position="302"/>
    </location>
</feature>
<feature type="binding site" evidence="1">
    <location>
        <begin position="92"/>
        <end position="102"/>
    </location>
    <ligand>
        <name>ATP</name>
        <dbReference type="ChEBI" id="CHEBI:30616"/>
    </ligand>
</feature>
<protein>
    <recommendedName>
        <fullName evidence="1">Homoserine kinase</fullName>
        <shortName evidence="1">HK</shortName>
        <shortName evidence="1">HSK</shortName>
        <ecNumber evidence="1">2.7.1.39</ecNumber>
    </recommendedName>
</protein>
<accession>Q3M9C9</accession>
<name>KHSE_TRIV2</name>
<organism>
    <name type="scientific">Trichormus variabilis (strain ATCC 29413 / PCC 7937)</name>
    <name type="common">Anabaena variabilis</name>
    <dbReference type="NCBI Taxonomy" id="240292"/>
    <lineage>
        <taxon>Bacteria</taxon>
        <taxon>Bacillati</taxon>
        <taxon>Cyanobacteriota</taxon>
        <taxon>Cyanophyceae</taxon>
        <taxon>Nostocales</taxon>
        <taxon>Nostocaceae</taxon>
        <taxon>Trichormus</taxon>
    </lineage>
</organism>
<evidence type="ECO:0000255" key="1">
    <source>
        <dbReference type="HAMAP-Rule" id="MF_00384"/>
    </source>
</evidence>